<accession>B7M160</accession>
<organism>
    <name type="scientific">Escherichia coli O8 (strain IAI1)</name>
    <dbReference type="NCBI Taxonomy" id="585034"/>
    <lineage>
        <taxon>Bacteria</taxon>
        <taxon>Pseudomonadati</taxon>
        <taxon>Pseudomonadota</taxon>
        <taxon>Gammaproteobacteria</taxon>
        <taxon>Enterobacterales</taxon>
        <taxon>Enterobacteriaceae</taxon>
        <taxon>Escherichia</taxon>
    </lineage>
</organism>
<evidence type="ECO:0000255" key="1">
    <source>
        <dbReference type="HAMAP-Rule" id="MF_01053"/>
    </source>
</evidence>
<reference key="1">
    <citation type="journal article" date="2009" name="PLoS Genet.">
        <title>Organised genome dynamics in the Escherichia coli species results in highly diverse adaptive paths.</title>
        <authorList>
            <person name="Touchon M."/>
            <person name="Hoede C."/>
            <person name="Tenaillon O."/>
            <person name="Barbe V."/>
            <person name="Baeriswyl S."/>
            <person name="Bidet P."/>
            <person name="Bingen E."/>
            <person name="Bonacorsi S."/>
            <person name="Bouchier C."/>
            <person name="Bouvet O."/>
            <person name="Calteau A."/>
            <person name="Chiapello H."/>
            <person name="Clermont O."/>
            <person name="Cruveiller S."/>
            <person name="Danchin A."/>
            <person name="Diard M."/>
            <person name="Dossat C."/>
            <person name="Karoui M.E."/>
            <person name="Frapy E."/>
            <person name="Garry L."/>
            <person name="Ghigo J.M."/>
            <person name="Gilles A.M."/>
            <person name="Johnson J."/>
            <person name="Le Bouguenec C."/>
            <person name="Lescat M."/>
            <person name="Mangenot S."/>
            <person name="Martinez-Jehanne V."/>
            <person name="Matic I."/>
            <person name="Nassif X."/>
            <person name="Oztas S."/>
            <person name="Petit M.A."/>
            <person name="Pichon C."/>
            <person name="Rouy Z."/>
            <person name="Ruf C.S."/>
            <person name="Schneider D."/>
            <person name="Tourret J."/>
            <person name="Vacherie B."/>
            <person name="Vallenet D."/>
            <person name="Medigue C."/>
            <person name="Rocha E.P.C."/>
            <person name="Denamur E."/>
        </authorList>
    </citation>
    <scope>NUCLEOTIDE SEQUENCE [LARGE SCALE GENOMIC DNA]</scope>
    <source>
        <strain>IAI1</strain>
    </source>
</reference>
<proteinExistence type="inferred from homology"/>
<sequence length="120" mass="13942">MDYEFLRDITGVVKVRMSMGHEVVGHWFNEEVKENLALLDEVEQAAHALKGSERSWQRAGHEYTLWMDGEEVMVRANQLEFAGDEMEEGMNYYDEESLSLCGVEDFLQVVAAYRNFVQQK</sequence>
<name>YACL_ECO8A</name>
<comment type="similarity">
    <text evidence="1">Belongs to the UPF0231 family.</text>
</comment>
<gene>
    <name evidence="1" type="primary">yacL</name>
    <name type="ordered locus">ECIAI1_0117</name>
</gene>
<dbReference type="EMBL" id="CU928160">
    <property type="protein sequence ID" value="CAQ97006.1"/>
    <property type="molecule type" value="Genomic_DNA"/>
</dbReference>
<dbReference type="RefSeq" id="WP_000384306.1">
    <property type="nucleotide sequence ID" value="NC_011741.1"/>
</dbReference>
<dbReference type="GeneID" id="93777317"/>
<dbReference type="KEGG" id="ecr:ECIAI1_0117"/>
<dbReference type="HOGENOM" id="CLU_139226_0_0_6"/>
<dbReference type="HAMAP" id="MF_01053">
    <property type="entry name" value="UPF0231"/>
    <property type="match status" value="1"/>
</dbReference>
<dbReference type="InterPro" id="IPR008249">
    <property type="entry name" value="UPF0231"/>
</dbReference>
<dbReference type="NCBIfam" id="NF003574">
    <property type="entry name" value="PRK05248.1-1"/>
    <property type="match status" value="1"/>
</dbReference>
<dbReference type="NCBIfam" id="NF003576">
    <property type="entry name" value="PRK05248.1-3"/>
    <property type="match status" value="1"/>
</dbReference>
<dbReference type="Pfam" id="PF06062">
    <property type="entry name" value="UPF0231"/>
    <property type="match status" value="1"/>
</dbReference>
<dbReference type="PIRSF" id="PIRSF006287">
    <property type="entry name" value="UCP006287"/>
    <property type="match status" value="1"/>
</dbReference>
<protein>
    <recommendedName>
        <fullName evidence="1">UPF0231 protein YacL</fullName>
    </recommendedName>
</protein>
<feature type="chain" id="PRO_1000136292" description="UPF0231 protein YacL">
    <location>
        <begin position="1"/>
        <end position="120"/>
    </location>
</feature>